<keyword id="KW-1015">Disulfide bond</keyword>
<keyword id="KW-1185">Reference proteome</keyword>
<keyword id="KW-0964">Secreted</keyword>
<keyword id="KW-0732">Signal</keyword>
<organism>
    <name type="scientific">Cavia porcellus</name>
    <name type="common">Guinea pig</name>
    <dbReference type="NCBI Taxonomy" id="10141"/>
    <lineage>
        <taxon>Eukaryota</taxon>
        <taxon>Metazoa</taxon>
        <taxon>Chordata</taxon>
        <taxon>Craniata</taxon>
        <taxon>Vertebrata</taxon>
        <taxon>Euteleostomi</taxon>
        <taxon>Mammalia</taxon>
        <taxon>Eutheria</taxon>
        <taxon>Euarchontoglires</taxon>
        <taxon>Glires</taxon>
        <taxon>Rodentia</taxon>
        <taxon>Hystricomorpha</taxon>
        <taxon>Caviidae</taxon>
        <taxon>Cavia</taxon>
    </lineage>
</organism>
<gene>
    <name type="primary">GUCA2A</name>
    <name type="synonym">GUCA2</name>
</gene>
<proteinExistence type="inferred from homology"/>
<sequence length="107" mass="11483">MNTFLLSALCLGAWAALVGAVTVQDGDFSFSLESVKKLKDLQEAPESKVQGRRKFVAPPLCSFSGFPEELRPVCKEPNSQDILNRLAVIAQDPSTCEICAYAACAGC</sequence>
<reference key="1">
    <citation type="submission" date="1996-08" db="EMBL/GenBank/DDBJ databases">
        <title>Sequence of guinea pig guanylin and guanylyl cyclase C (GC-C) cDNA: expression and tissue distribution.</title>
        <authorList>
            <person name="Kruhoeffer M."/>
            <person name="Cetin Y."/>
            <person name="Kaempf U."/>
            <person name="Forssmann W.-G."/>
        </authorList>
    </citation>
    <scope>NUCLEOTIDE SEQUENCE [GENOMIC DNA / MRNA]</scope>
    <source>
        <tissue>Colon</tissue>
    </source>
</reference>
<dbReference type="EMBL" id="Z74736">
    <property type="protein sequence ID" value="CAA98991.1"/>
    <property type="molecule type" value="mRNA"/>
</dbReference>
<dbReference type="EMBL" id="Z74737">
    <property type="protein sequence ID" value="CAA98992.1"/>
    <property type="molecule type" value="Genomic_DNA"/>
</dbReference>
<dbReference type="RefSeq" id="NP_001166373.1">
    <property type="nucleotide sequence ID" value="NM_001172902.1"/>
</dbReference>
<dbReference type="SMR" id="P70664"/>
<dbReference type="FunCoup" id="P70664">
    <property type="interactions" value="8"/>
</dbReference>
<dbReference type="STRING" id="10141.ENSCPOP00000015206"/>
<dbReference type="GeneID" id="100135534"/>
<dbReference type="KEGG" id="cpoc:100135534"/>
<dbReference type="CTD" id="2980"/>
<dbReference type="eggNOG" id="ENOG502S7QR">
    <property type="taxonomic scope" value="Eukaryota"/>
</dbReference>
<dbReference type="HOGENOM" id="CLU_166952_0_0_1"/>
<dbReference type="InParanoid" id="P70664"/>
<dbReference type="OrthoDB" id="9926421at2759"/>
<dbReference type="Proteomes" id="UP000005447">
    <property type="component" value="Unassembled WGS sequence"/>
</dbReference>
<dbReference type="GO" id="GO:0005576">
    <property type="term" value="C:extracellular region"/>
    <property type="evidence" value="ECO:0007669"/>
    <property type="project" value="UniProtKB-SubCell"/>
</dbReference>
<dbReference type="GO" id="GO:0030250">
    <property type="term" value="F:guanylate cyclase activator activity"/>
    <property type="evidence" value="ECO:0007669"/>
    <property type="project" value="InterPro"/>
</dbReference>
<dbReference type="FunFam" id="3.90.1450.10:FF:000002">
    <property type="entry name" value="Guanylate cyclase activator 2A"/>
    <property type="match status" value="1"/>
</dbReference>
<dbReference type="Gene3D" id="3.90.1450.10">
    <property type="entry name" value="Guanylin"/>
    <property type="match status" value="1"/>
</dbReference>
<dbReference type="InterPro" id="IPR000879">
    <property type="entry name" value="Guanylin"/>
</dbReference>
<dbReference type="InterPro" id="IPR036382">
    <property type="entry name" value="Guanylin_sf"/>
</dbReference>
<dbReference type="PANTHER" id="PTHR11318:SF3">
    <property type="entry name" value="GUANYLIN"/>
    <property type="match status" value="1"/>
</dbReference>
<dbReference type="PANTHER" id="PTHR11318">
    <property type="entry name" value="GUANYLIN FAMILY MEMBER"/>
    <property type="match status" value="1"/>
</dbReference>
<dbReference type="Pfam" id="PF02058">
    <property type="entry name" value="Guanylin"/>
    <property type="match status" value="1"/>
</dbReference>
<dbReference type="PIRSF" id="PIRSF001849">
    <property type="entry name" value="Guanylin"/>
    <property type="match status" value="1"/>
</dbReference>
<dbReference type="PRINTS" id="PR00774">
    <property type="entry name" value="GUANYLIN"/>
</dbReference>
<dbReference type="SUPFAM" id="SSF89890">
    <property type="entry name" value="Proguanylin"/>
    <property type="match status" value="1"/>
</dbReference>
<feature type="signal peptide" evidence="2">
    <location>
        <begin position="1"/>
        <end position="20"/>
    </location>
</feature>
<feature type="propeptide" id="PRO_0000013133">
    <location>
        <begin position="21"/>
        <end position="92"/>
    </location>
</feature>
<feature type="peptide" id="PRO_0000013134" description="Guanylin">
    <location>
        <begin position="93"/>
        <end position="107"/>
    </location>
</feature>
<feature type="disulfide bond" evidence="1">
    <location>
        <begin position="61"/>
        <end position="74"/>
    </location>
</feature>
<feature type="disulfide bond" evidence="1">
    <location>
        <begin position="96"/>
        <end position="104"/>
    </location>
</feature>
<feature type="disulfide bond" evidence="1">
    <location>
        <begin position="99"/>
        <end position="107"/>
    </location>
</feature>
<comment type="function">
    <text>Endogenous activator of intestinal guanylate cyclase. It stimulates this enzyme through the same receptor binding region as the heat-stable enterotoxins.</text>
</comment>
<comment type="subcellular location">
    <subcellularLocation>
        <location>Secreted</location>
    </subcellularLocation>
</comment>
<comment type="similarity">
    <text evidence="3">Belongs to the guanylin family.</text>
</comment>
<name>GUC2A_CAVPO</name>
<evidence type="ECO:0000250" key="1"/>
<evidence type="ECO:0000255" key="2"/>
<evidence type="ECO:0000305" key="3"/>
<accession>P70664</accession>
<protein>
    <recommendedName>
        <fullName>Guanylin</fullName>
    </recommendedName>
    <alternativeName>
        <fullName>Guanylate cyclase activator 2A</fullName>
    </alternativeName>
</protein>